<feature type="chain" id="PRO_0000171103" description="UPF0354 protein lin1649">
    <location>
        <begin position="1"/>
        <end position="266"/>
    </location>
</feature>
<comment type="similarity">
    <text evidence="1">Belongs to the UPF0354 family.</text>
</comment>
<name>Y1649_LISIN</name>
<organism>
    <name type="scientific">Listeria innocua serovar 6a (strain ATCC BAA-680 / CLIP 11262)</name>
    <dbReference type="NCBI Taxonomy" id="272626"/>
    <lineage>
        <taxon>Bacteria</taxon>
        <taxon>Bacillati</taxon>
        <taxon>Bacillota</taxon>
        <taxon>Bacilli</taxon>
        <taxon>Bacillales</taxon>
        <taxon>Listeriaceae</taxon>
        <taxon>Listeria</taxon>
    </lineage>
</organism>
<evidence type="ECO:0000255" key="1">
    <source>
        <dbReference type="HAMAP-Rule" id="MF_01548"/>
    </source>
</evidence>
<protein>
    <recommendedName>
        <fullName evidence="1">UPF0354 protein lin1649</fullName>
    </recommendedName>
</protein>
<gene>
    <name type="ordered locus">lin1649</name>
</gene>
<sequence length="266" mass="30124">MAKMTTLKMKERLEKELNKPNRQFAYERDSDTLSVTQNGKKVTLAIPQIIANYENDGEAAIEKIIYYVEEGFLAASGNIELKNNTANIYPVVRATSFPDTTKAGEVLLTDEHTAETKIFYAFDLGKSYRFIEKNMLEKEGLSHEEVRKAAFDNLGKLEIPLKKDSVNGNDFYFVRTNDGYDASRLLNVSFLQQMREKLTGEMVLAVPHQDVLIIGAIKDNTGYDVLAHMTMDFFADGLVPITSLPFVYNNGKLEPIFIMAKNRLKE</sequence>
<reference key="1">
    <citation type="journal article" date="2001" name="Science">
        <title>Comparative genomics of Listeria species.</title>
        <authorList>
            <person name="Glaser P."/>
            <person name="Frangeul L."/>
            <person name="Buchrieser C."/>
            <person name="Rusniok C."/>
            <person name="Amend A."/>
            <person name="Baquero F."/>
            <person name="Berche P."/>
            <person name="Bloecker H."/>
            <person name="Brandt P."/>
            <person name="Chakraborty T."/>
            <person name="Charbit A."/>
            <person name="Chetouani F."/>
            <person name="Couve E."/>
            <person name="de Daruvar A."/>
            <person name="Dehoux P."/>
            <person name="Domann E."/>
            <person name="Dominguez-Bernal G."/>
            <person name="Duchaud E."/>
            <person name="Durant L."/>
            <person name="Dussurget O."/>
            <person name="Entian K.-D."/>
            <person name="Fsihi H."/>
            <person name="Garcia-del Portillo F."/>
            <person name="Garrido P."/>
            <person name="Gautier L."/>
            <person name="Goebel W."/>
            <person name="Gomez-Lopez N."/>
            <person name="Hain T."/>
            <person name="Hauf J."/>
            <person name="Jackson D."/>
            <person name="Jones L.-M."/>
            <person name="Kaerst U."/>
            <person name="Kreft J."/>
            <person name="Kuhn M."/>
            <person name="Kunst F."/>
            <person name="Kurapkat G."/>
            <person name="Madueno E."/>
            <person name="Maitournam A."/>
            <person name="Mata Vicente J."/>
            <person name="Ng E."/>
            <person name="Nedjari H."/>
            <person name="Nordsiek G."/>
            <person name="Novella S."/>
            <person name="de Pablos B."/>
            <person name="Perez-Diaz J.-C."/>
            <person name="Purcell R."/>
            <person name="Remmel B."/>
            <person name="Rose M."/>
            <person name="Schlueter T."/>
            <person name="Simoes N."/>
            <person name="Tierrez A."/>
            <person name="Vazquez-Boland J.-A."/>
            <person name="Voss H."/>
            <person name="Wehland J."/>
            <person name="Cossart P."/>
        </authorList>
    </citation>
    <scope>NUCLEOTIDE SEQUENCE [LARGE SCALE GENOMIC DNA]</scope>
    <source>
        <strain>ATCC BAA-680 / CLIP 11262</strain>
    </source>
</reference>
<proteinExistence type="inferred from homology"/>
<dbReference type="EMBL" id="AL596169">
    <property type="protein sequence ID" value="CAC96880.1"/>
    <property type="molecule type" value="Genomic_DNA"/>
</dbReference>
<dbReference type="PIR" id="AH1638">
    <property type="entry name" value="AH1638"/>
</dbReference>
<dbReference type="RefSeq" id="WP_003762488.1">
    <property type="nucleotide sequence ID" value="NC_003212.1"/>
</dbReference>
<dbReference type="STRING" id="272626.gene:17565980"/>
<dbReference type="GeneID" id="93235031"/>
<dbReference type="KEGG" id="lin:lin1649"/>
<dbReference type="eggNOG" id="COG4848">
    <property type="taxonomic scope" value="Bacteria"/>
</dbReference>
<dbReference type="HOGENOM" id="CLU_085634_0_0_9"/>
<dbReference type="OrthoDB" id="154553at2"/>
<dbReference type="Proteomes" id="UP000002513">
    <property type="component" value="Chromosome"/>
</dbReference>
<dbReference type="HAMAP" id="MF_01548">
    <property type="entry name" value="UPF0354"/>
    <property type="match status" value="1"/>
</dbReference>
<dbReference type="InterPro" id="IPR010838">
    <property type="entry name" value="DUF1444"/>
</dbReference>
<dbReference type="NCBIfam" id="NF010189">
    <property type="entry name" value="PRK13668.1"/>
    <property type="match status" value="1"/>
</dbReference>
<dbReference type="Pfam" id="PF07285">
    <property type="entry name" value="DUF1444"/>
    <property type="match status" value="1"/>
</dbReference>
<dbReference type="PIRSF" id="PIRSF012562">
    <property type="entry name" value="UCP012562"/>
    <property type="match status" value="1"/>
</dbReference>
<accession>Q92BA1</accession>